<comment type="function">
    <text evidence="1">Nucleotidyltransferase involved in the post-translational modification of proteins. It can catalyze the addition of adenosine monophosphate (AMP) or uridine monophosphate (UMP) to a protein, resulting in modifications known as AMPylation and UMPylation.</text>
</comment>
<comment type="catalytic activity">
    <reaction evidence="1">
        <text>L-seryl-[protein] + ATP = 3-O-(5'-adenylyl)-L-seryl-[protein] + diphosphate</text>
        <dbReference type="Rhea" id="RHEA:58120"/>
        <dbReference type="Rhea" id="RHEA-COMP:9863"/>
        <dbReference type="Rhea" id="RHEA-COMP:15073"/>
        <dbReference type="ChEBI" id="CHEBI:29999"/>
        <dbReference type="ChEBI" id="CHEBI:30616"/>
        <dbReference type="ChEBI" id="CHEBI:33019"/>
        <dbReference type="ChEBI" id="CHEBI:142516"/>
        <dbReference type="EC" id="2.7.7.108"/>
    </reaction>
</comment>
<comment type="catalytic activity">
    <reaction evidence="1">
        <text>L-threonyl-[protein] + ATP = 3-O-(5'-adenylyl)-L-threonyl-[protein] + diphosphate</text>
        <dbReference type="Rhea" id="RHEA:54292"/>
        <dbReference type="Rhea" id="RHEA-COMP:11060"/>
        <dbReference type="Rhea" id="RHEA-COMP:13847"/>
        <dbReference type="ChEBI" id="CHEBI:30013"/>
        <dbReference type="ChEBI" id="CHEBI:30616"/>
        <dbReference type="ChEBI" id="CHEBI:33019"/>
        <dbReference type="ChEBI" id="CHEBI:138113"/>
        <dbReference type="EC" id="2.7.7.108"/>
    </reaction>
</comment>
<comment type="catalytic activity">
    <reaction evidence="1">
        <text>L-tyrosyl-[protein] + ATP = O-(5'-adenylyl)-L-tyrosyl-[protein] + diphosphate</text>
        <dbReference type="Rhea" id="RHEA:54288"/>
        <dbReference type="Rhea" id="RHEA-COMP:10136"/>
        <dbReference type="Rhea" id="RHEA-COMP:13846"/>
        <dbReference type="ChEBI" id="CHEBI:30616"/>
        <dbReference type="ChEBI" id="CHEBI:33019"/>
        <dbReference type="ChEBI" id="CHEBI:46858"/>
        <dbReference type="ChEBI" id="CHEBI:83624"/>
        <dbReference type="EC" id="2.7.7.108"/>
    </reaction>
</comment>
<comment type="catalytic activity">
    <reaction evidence="1">
        <text>L-histidyl-[protein] + UTP = N(tele)-(5'-uridylyl)-L-histidyl-[protein] + diphosphate</text>
        <dbReference type="Rhea" id="RHEA:83891"/>
        <dbReference type="Rhea" id="RHEA-COMP:9745"/>
        <dbReference type="Rhea" id="RHEA-COMP:20239"/>
        <dbReference type="ChEBI" id="CHEBI:29979"/>
        <dbReference type="ChEBI" id="CHEBI:33019"/>
        <dbReference type="ChEBI" id="CHEBI:46398"/>
        <dbReference type="ChEBI" id="CHEBI:233474"/>
    </reaction>
</comment>
<comment type="catalytic activity">
    <reaction evidence="1">
        <text>L-seryl-[protein] + UTP = O-(5'-uridylyl)-L-seryl-[protein] + diphosphate</text>
        <dbReference type="Rhea" id="RHEA:64604"/>
        <dbReference type="Rhea" id="RHEA-COMP:9863"/>
        <dbReference type="Rhea" id="RHEA-COMP:16635"/>
        <dbReference type="ChEBI" id="CHEBI:29999"/>
        <dbReference type="ChEBI" id="CHEBI:33019"/>
        <dbReference type="ChEBI" id="CHEBI:46398"/>
        <dbReference type="ChEBI" id="CHEBI:156051"/>
    </reaction>
</comment>
<comment type="catalytic activity">
    <reaction evidence="1">
        <text>L-tyrosyl-[protein] + UTP = O-(5'-uridylyl)-L-tyrosyl-[protein] + diphosphate</text>
        <dbReference type="Rhea" id="RHEA:83887"/>
        <dbReference type="Rhea" id="RHEA-COMP:10136"/>
        <dbReference type="Rhea" id="RHEA-COMP:20238"/>
        <dbReference type="ChEBI" id="CHEBI:33019"/>
        <dbReference type="ChEBI" id="CHEBI:46398"/>
        <dbReference type="ChEBI" id="CHEBI:46858"/>
        <dbReference type="ChEBI" id="CHEBI:90602"/>
    </reaction>
</comment>
<comment type="cofactor">
    <cofactor evidence="1">
        <name>Mg(2+)</name>
        <dbReference type="ChEBI" id="CHEBI:18420"/>
    </cofactor>
    <cofactor evidence="1">
        <name>Mn(2+)</name>
        <dbReference type="ChEBI" id="CHEBI:29035"/>
    </cofactor>
</comment>
<comment type="similarity">
    <text evidence="1">Belongs to the SELO family.</text>
</comment>
<accession>C0ZD92</accession>
<organism>
    <name type="scientific">Brevibacillus brevis (strain 47 / JCM 6285 / NBRC 100599)</name>
    <dbReference type="NCBI Taxonomy" id="358681"/>
    <lineage>
        <taxon>Bacteria</taxon>
        <taxon>Bacillati</taxon>
        <taxon>Bacillota</taxon>
        <taxon>Bacilli</taxon>
        <taxon>Bacillales</taxon>
        <taxon>Paenibacillaceae</taxon>
        <taxon>Brevibacillus</taxon>
    </lineage>
</organism>
<keyword id="KW-0067">ATP-binding</keyword>
<keyword id="KW-0460">Magnesium</keyword>
<keyword id="KW-0464">Manganese</keyword>
<keyword id="KW-0479">Metal-binding</keyword>
<keyword id="KW-0547">Nucleotide-binding</keyword>
<keyword id="KW-0548">Nucleotidyltransferase</keyword>
<keyword id="KW-1185">Reference proteome</keyword>
<keyword id="KW-0808">Transferase</keyword>
<gene>
    <name evidence="1" type="primary">ydiU</name>
    <name evidence="1" type="synonym">selO</name>
    <name type="ordered locus">BBR47_27740</name>
</gene>
<name>SELO_BREBN</name>
<sequence>MTDKKPTIEPGWNFDNSYTTLPKSFFSRLNPPPVRSPKLAILNERLAKSLGLNVEALQSEEVIAMLAGNKTPEGAMPLAQAYAGHQFGHFTMLGDGRALLLGEQITPTGERFDIQLKGSGRTPYSRGGDGRAALGPMLREYIISEAMHGLGIPTTRSLAVVTTGESVYRESELPGAILTRVAASHIRVGTFQFAARFCSIEDLRALADYTLQRHFPEIETEENRYLLLLKGVIQRQAALIAKWQLVGFIHGVMNTDNMAISGETIDYGPCAFMDTYDPATVFSSIDVQGRYAYGNQPYIAVWNLSRFAESLLPLLHENEAQAVKIAEDVLAEFSKLYHSNWLTGMRAKLGLFNEEEQDEALIEGLLNMMKEHRADYTNTFRALTLNQPEETVLFGTSEFTEWHEQWKARLTRQPEDTDAVQQGMKKNNPAVIPRNHRVEEALEAAWKEGDYTVMERLLTVLSDPYAYTPEQVEYTTLPAESARPYQTFCGT</sequence>
<proteinExistence type="inferred from homology"/>
<reference key="1">
    <citation type="submission" date="2005-03" db="EMBL/GenBank/DDBJ databases">
        <title>Brevibacillus brevis strain 47, complete genome.</title>
        <authorList>
            <person name="Hosoyama A."/>
            <person name="Yamada R."/>
            <person name="Hongo Y."/>
            <person name="Terui Y."/>
            <person name="Ankai A."/>
            <person name="Masuyama W."/>
            <person name="Sekiguchi M."/>
            <person name="Takeda T."/>
            <person name="Asano K."/>
            <person name="Ohji S."/>
            <person name="Ichikawa N."/>
            <person name="Narita S."/>
            <person name="Aoki N."/>
            <person name="Miura H."/>
            <person name="Matsushita S."/>
            <person name="Sekigawa T."/>
            <person name="Yamagata H."/>
            <person name="Yoshikawa H."/>
            <person name="Udaka S."/>
            <person name="Tanikawa S."/>
            <person name="Fujita N."/>
        </authorList>
    </citation>
    <scope>NUCLEOTIDE SEQUENCE [LARGE SCALE GENOMIC DNA]</scope>
    <source>
        <strain>47 / JCM 6285 / NBRC 100599</strain>
    </source>
</reference>
<dbReference type="EC" id="2.7.7.-" evidence="1"/>
<dbReference type="EC" id="2.7.7.108" evidence="1"/>
<dbReference type="EMBL" id="AP008955">
    <property type="protein sequence ID" value="BAH43751.1"/>
    <property type="molecule type" value="Genomic_DNA"/>
</dbReference>
<dbReference type="RefSeq" id="WP_015891071.1">
    <property type="nucleotide sequence ID" value="NC_012491.1"/>
</dbReference>
<dbReference type="SMR" id="C0ZD92"/>
<dbReference type="STRING" id="358681.BBR47_27740"/>
<dbReference type="KEGG" id="bbe:BBR47_27740"/>
<dbReference type="eggNOG" id="COG0397">
    <property type="taxonomic scope" value="Bacteria"/>
</dbReference>
<dbReference type="HOGENOM" id="CLU_010245_4_1_9"/>
<dbReference type="Proteomes" id="UP000001877">
    <property type="component" value="Chromosome"/>
</dbReference>
<dbReference type="GO" id="GO:0070733">
    <property type="term" value="F:AMPylase activity"/>
    <property type="evidence" value="ECO:0007669"/>
    <property type="project" value="TreeGrafter"/>
</dbReference>
<dbReference type="GO" id="GO:0005524">
    <property type="term" value="F:ATP binding"/>
    <property type="evidence" value="ECO:0007669"/>
    <property type="project" value="UniProtKB-UniRule"/>
</dbReference>
<dbReference type="GO" id="GO:0000287">
    <property type="term" value="F:magnesium ion binding"/>
    <property type="evidence" value="ECO:0007669"/>
    <property type="project" value="UniProtKB-UniRule"/>
</dbReference>
<dbReference type="HAMAP" id="MF_00692">
    <property type="entry name" value="YdiU_SelO"/>
    <property type="match status" value="1"/>
</dbReference>
<dbReference type="InterPro" id="IPR003846">
    <property type="entry name" value="SelO"/>
</dbReference>
<dbReference type="NCBIfam" id="NF000658">
    <property type="entry name" value="PRK00029.1"/>
    <property type="match status" value="1"/>
</dbReference>
<dbReference type="PANTHER" id="PTHR32057">
    <property type="entry name" value="PROTEIN ADENYLYLTRANSFERASE SELO, MITOCHONDRIAL"/>
    <property type="match status" value="1"/>
</dbReference>
<dbReference type="PANTHER" id="PTHR32057:SF14">
    <property type="entry name" value="PROTEIN ADENYLYLTRANSFERASE SELO, MITOCHONDRIAL"/>
    <property type="match status" value="1"/>
</dbReference>
<dbReference type="Pfam" id="PF02696">
    <property type="entry name" value="SelO"/>
    <property type="match status" value="1"/>
</dbReference>
<evidence type="ECO:0000255" key="1">
    <source>
        <dbReference type="HAMAP-Rule" id="MF_00692"/>
    </source>
</evidence>
<feature type="chain" id="PRO_1000200058" description="Protein nucleotidyltransferase YdiU">
    <location>
        <begin position="1"/>
        <end position="491"/>
    </location>
</feature>
<feature type="active site" description="Proton acceptor" evidence="1">
    <location>
        <position position="256"/>
    </location>
</feature>
<feature type="binding site" evidence="1">
    <location>
        <position position="94"/>
    </location>
    <ligand>
        <name>ATP</name>
        <dbReference type="ChEBI" id="CHEBI:30616"/>
    </ligand>
</feature>
<feature type="binding site" evidence="1">
    <location>
        <position position="96"/>
    </location>
    <ligand>
        <name>ATP</name>
        <dbReference type="ChEBI" id="CHEBI:30616"/>
    </ligand>
</feature>
<feature type="binding site" evidence="1">
    <location>
        <position position="97"/>
    </location>
    <ligand>
        <name>ATP</name>
        <dbReference type="ChEBI" id="CHEBI:30616"/>
    </ligand>
</feature>
<feature type="binding site" evidence="1">
    <location>
        <position position="117"/>
    </location>
    <ligand>
        <name>ATP</name>
        <dbReference type="ChEBI" id="CHEBI:30616"/>
    </ligand>
</feature>
<feature type="binding site" evidence="1">
    <location>
        <position position="129"/>
    </location>
    <ligand>
        <name>ATP</name>
        <dbReference type="ChEBI" id="CHEBI:30616"/>
    </ligand>
</feature>
<feature type="binding site" evidence="1">
    <location>
        <position position="130"/>
    </location>
    <ligand>
        <name>ATP</name>
        <dbReference type="ChEBI" id="CHEBI:30616"/>
    </ligand>
</feature>
<feature type="binding site" evidence="1">
    <location>
        <position position="180"/>
    </location>
    <ligand>
        <name>ATP</name>
        <dbReference type="ChEBI" id="CHEBI:30616"/>
    </ligand>
</feature>
<feature type="binding site" evidence="1">
    <location>
        <position position="187"/>
    </location>
    <ligand>
        <name>ATP</name>
        <dbReference type="ChEBI" id="CHEBI:30616"/>
    </ligand>
</feature>
<feature type="binding site" evidence="1">
    <location>
        <position position="257"/>
    </location>
    <ligand>
        <name>Mg(2+)</name>
        <dbReference type="ChEBI" id="CHEBI:18420"/>
    </ligand>
</feature>
<feature type="binding site" evidence="1">
    <location>
        <position position="266"/>
    </location>
    <ligand>
        <name>ATP</name>
        <dbReference type="ChEBI" id="CHEBI:30616"/>
    </ligand>
</feature>
<feature type="binding site" evidence="1">
    <location>
        <position position="266"/>
    </location>
    <ligand>
        <name>Mg(2+)</name>
        <dbReference type="ChEBI" id="CHEBI:18420"/>
    </ligand>
</feature>
<protein>
    <recommendedName>
        <fullName evidence="1">Protein nucleotidyltransferase YdiU</fullName>
        <ecNumber evidence="1">2.7.7.-</ecNumber>
    </recommendedName>
    <alternativeName>
        <fullName evidence="1">Protein adenylyltransferase YdiU</fullName>
        <ecNumber evidence="1">2.7.7.108</ecNumber>
    </alternativeName>
    <alternativeName>
        <fullName evidence="1">Protein uridylyltransferase YdiU</fullName>
        <ecNumber evidence="1">2.7.7.-</ecNumber>
    </alternativeName>
</protein>